<reference key="1">
    <citation type="journal article" date="2008" name="PLoS ONE">
        <title>An optimized chloroplast DNA extraction protocol for grasses (Poaceae) proves suitable for whole plastid genome sequencing and SNP detection.</title>
        <authorList>
            <person name="Diekmann K."/>
            <person name="Hodkinson T.R."/>
            <person name="Fricke E."/>
            <person name="Barth S."/>
        </authorList>
    </citation>
    <scope>NUCLEOTIDE SEQUENCE [LARGE SCALE GENOMIC DNA]</scope>
    <source>
        <strain>cv. Cashel</strain>
    </source>
</reference>
<dbReference type="EC" id="7.1.1.-"/>
<dbReference type="EMBL" id="AM777385">
    <property type="protein sequence ID" value="CAO86029.1"/>
    <property type="molecule type" value="Genomic_DNA"/>
</dbReference>
<dbReference type="RefSeq" id="YP_001531335.1">
    <property type="nucleotide sequence ID" value="NC_009950.1"/>
</dbReference>
<dbReference type="SMR" id="A8Y9E0"/>
<dbReference type="GeneID" id="5696654"/>
<dbReference type="KEGG" id="lper:5696654"/>
<dbReference type="GO" id="GO:0009535">
    <property type="term" value="C:chloroplast thylakoid membrane"/>
    <property type="evidence" value="ECO:0007669"/>
    <property type="project" value="UniProtKB-SubCell"/>
</dbReference>
<dbReference type="GO" id="GO:0008137">
    <property type="term" value="F:NADH dehydrogenase (ubiquinone) activity"/>
    <property type="evidence" value="ECO:0007669"/>
    <property type="project" value="InterPro"/>
</dbReference>
<dbReference type="GO" id="GO:0048038">
    <property type="term" value="F:quinone binding"/>
    <property type="evidence" value="ECO:0007669"/>
    <property type="project" value="UniProtKB-KW"/>
</dbReference>
<dbReference type="FunFam" id="1.20.120.1200:FF:000002">
    <property type="entry name" value="NAD(P)H-quinone oxidoreductase subunit 6, chloroplastic"/>
    <property type="match status" value="1"/>
</dbReference>
<dbReference type="Gene3D" id="1.20.120.1200">
    <property type="entry name" value="NADH-ubiquinone/plastoquinone oxidoreductase chain 6, subunit NuoJ"/>
    <property type="match status" value="1"/>
</dbReference>
<dbReference type="InterPro" id="IPR050290">
    <property type="entry name" value="NAD(P)H-Q_Oxidoreduct_6"/>
</dbReference>
<dbReference type="InterPro" id="IPR001457">
    <property type="entry name" value="NADH_UbQ/plastoQ_OxRdtase_su6"/>
</dbReference>
<dbReference type="InterPro" id="IPR042106">
    <property type="entry name" value="Nuo/plastoQ_OxRdtase_6_NuoJ"/>
</dbReference>
<dbReference type="PANTHER" id="PTHR48479">
    <property type="entry name" value="NAD(P)H-QUINONE OXIDOREDUCTASE SUBUNIT 6, CHLOROPLASTIC"/>
    <property type="match status" value="1"/>
</dbReference>
<dbReference type="PANTHER" id="PTHR48479:SF1">
    <property type="entry name" value="NAD(P)H-QUINONE OXIDOREDUCTASE SUBUNIT 6, CHLOROPLASTIC"/>
    <property type="match status" value="1"/>
</dbReference>
<dbReference type="Pfam" id="PF00499">
    <property type="entry name" value="Oxidored_q3"/>
    <property type="match status" value="1"/>
</dbReference>
<gene>
    <name type="primary">ndhG</name>
    <name type="ordered locus">LopeCp109</name>
</gene>
<comment type="function">
    <text evidence="1">NDH shuttles electrons from NAD(P)H:plastoquinone, via FMN and iron-sulfur (Fe-S) centers, to quinones in the photosynthetic chain and possibly in a chloroplast respiratory chain. The immediate electron acceptor for the enzyme in this species is believed to be plastoquinone. Couples the redox reaction to proton translocation, and thus conserves the redox energy in a proton gradient (By similarity).</text>
</comment>
<comment type="catalytic activity">
    <reaction>
        <text>a plastoquinone + NADH + (n+1) H(+)(in) = a plastoquinol + NAD(+) + n H(+)(out)</text>
        <dbReference type="Rhea" id="RHEA:42608"/>
        <dbReference type="Rhea" id="RHEA-COMP:9561"/>
        <dbReference type="Rhea" id="RHEA-COMP:9562"/>
        <dbReference type="ChEBI" id="CHEBI:15378"/>
        <dbReference type="ChEBI" id="CHEBI:17757"/>
        <dbReference type="ChEBI" id="CHEBI:57540"/>
        <dbReference type="ChEBI" id="CHEBI:57945"/>
        <dbReference type="ChEBI" id="CHEBI:62192"/>
    </reaction>
</comment>
<comment type="catalytic activity">
    <reaction>
        <text>a plastoquinone + NADPH + (n+1) H(+)(in) = a plastoquinol + NADP(+) + n H(+)(out)</text>
        <dbReference type="Rhea" id="RHEA:42612"/>
        <dbReference type="Rhea" id="RHEA-COMP:9561"/>
        <dbReference type="Rhea" id="RHEA-COMP:9562"/>
        <dbReference type="ChEBI" id="CHEBI:15378"/>
        <dbReference type="ChEBI" id="CHEBI:17757"/>
        <dbReference type="ChEBI" id="CHEBI:57783"/>
        <dbReference type="ChEBI" id="CHEBI:58349"/>
        <dbReference type="ChEBI" id="CHEBI:62192"/>
    </reaction>
</comment>
<comment type="subunit">
    <text evidence="1">NDH is composed of at least 16 different subunits, 5 of which are encoded in the nucleus.</text>
</comment>
<comment type="subcellular location">
    <subcellularLocation>
        <location evidence="1">Plastid</location>
        <location evidence="1">Chloroplast thylakoid membrane</location>
        <topology evidence="1">Multi-pass membrane protein</topology>
    </subcellularLocation>
</comment>
<comment type="similarity">
    <text evidence="3">Belongs to the complex I subunit 6 family.</text>
</comment>
<feature type="chain" id="PRO_0000360267" description="NAD(P)H-quinone oxidoreductase subunit 6, chloroplastic">
    <location>
        <begin position="1"/>
        <end position="176"/>
    </location>
</feature>
<feature type="transmembrane region" description="Helical" evidence="2">
    <location>
        <begin position="10"/>
        <end position="30"/>
    </location>
</feature>
<feature type="transmembrane region" description="Helical" evidence="2">
    <location>
        <begin position="33"/>
        <end position="53"/>
    </location>
</feature>
<feature type="transmembrane region" description="Helical" evidence="2">
    <location>
        <begin position="60"/>
        <end position="80"/>
    </location>
</feature>
<feature type="transmembrane region" description="Helical" evidence="2">
    <location>
        <begin position="95"/>
        <end position="115"/>
    </location>
</feature>
<feature type="transmembrane region" description="Helical" evidence="2">
    <location>
        <begin position="152"/>
        <end position="172"/>
    </location>
</feature>
<accession>A8Y9E0</accession>
<name>NU6C_LOLPR</name>
<evidence type="ECO:0000250" key="1"/>
<evidence type="ECO:0000255" key="2"/>
<evidence type="ECO:0000305" key="3"/>
<protein>
    <recommendedName>
        <fullName>NAD(P)H-quinone oxidoreductase subunit 6, chloroplastic</fullName>
        <ecNumber>7.1.1.-</ecNumber>
    </recommendedName>
    <alternativeName>
        <fullName>NAD(P)H dehydrogenase subunit 6</fullName>
    </alternativeName>
    <alternativeName>
        <fullName>NADH-plastoquinone oxidoreductase subunit 6</fullName>
    </alternativeName>
</protein>
<proteinExistence type="inferred from homology"/>
<organism>
    <name type="scientific">Lolium perenne</name>
    <name type="common">Perennial ryegrass</name>
    <dbReference type="NCBI Taxonomy" id="4522"/>
    <lineage>
        <taxon>Eukaryota</taxon>
        <taxon>Viridiplantae</taxon>
        <taxon>Streptophyta</taxon>
        <taxon>Embryophyta</taxon>
        <taxon>Tracheophyta</taxon>
        <taxon>Spermatophyta</taxon>
        <taxon>Magnoliopsida</taxon>
        <taxon>Liliopsida</taxon>
        <taxon>Poales</taxon>
        <taxon>Poaceae</taxon>
        <taxon>BOP clade</taxon>
        <taxon>Pooideae</taxon>
        <taxon>Poodae</taxon>
        <taxon>Poeae</taxon>
        <taxon>Poeae Chloroplast Group 2 (Poeae type)</taxon>
        <taxon>Loliodinae</taxon>
        <taxon>Loliinae</taxon>
        <taxon>Lolium</taxon>
    </lineage>
</organism>
<sequence length="176" mass="19461">MDLPGPIHEILMLFGGFVLLLGGLGVVLLTNPIYSAFSLGLVLVCISLFYFLLNSYFVAVAQLLIYVGAINVLIIFAVMFVNGSEWSKDKNYWTIGDGFTSIVCITIVFSLMTTIPDTSWYGILWTTRSNQIVEQGLINNVQQIGIHLATDFYLPFELISIILLVSLIGAITMARQ</sequence>
<keyword id="KW-0150">Chloroplast</keyword>
<keyword id="KW-0472">Membrane</keyword>
<keyword id="KW-0520">NAD</keyword>
<keyword id="KW-0521">NADP</keyword>
<keyword id="KW-0934">Plastid</keyword>
<keyword id="KW-0618">Plastoquinone</keyword>
<keyword id="KW-0874">Quinone</keyword>
<keyword id="KW-0793">Thylakoid</keyword>
<keyword id="KW-1278">Translocase</keyword>
<keyword id="KW-0812">Transmembrane</keyword>
<keyword id="KW-1133">Transmembrane helix</keyword>
<keyword id="KW-0813">Transport</keyword>
<geneLocation type="chloroplast"/>